<dbReference type="EMBL" id="AF016917">
    <property type="protein sequence ID" value="AAB70007.1"/>
    <property type="molecule type" value="mRNA"/>
</dbReference>
<dbReference type="EMBL" id="AL391845">
    <property type="status" value="NOT_ANNOTATED_CDS"/>
    <property type="molecule type" value="Genomic_DNA"/>
</dbReference>
<dbReference type="EMBL" id="BC033801">
    <property type="protein sequence ID" value="AAH33801.1"/>
    <property type="molecule type" value="mRNA"/>
</dbReference>
<dbReference type="CCDS" id="CCDS36.1"/>
<dbReference type="RefSeq" id="NP_000806.2">
    <property type="nucleotide sequence ID" value="NM_000815.4"/>
</dbReference>
<dbReference type="PDB" id="7QN5">
    <property type="method" value="EM"/>
    <property type="resolution" value="2.50 A"/>
    <property type="chains" value="E=1-452"/>
</dbReference>
<dbReference type="PDB" id="7QN6">
    <property type="method" value="EM"/>
    <property type="resolution" value="2.90 A"/>
    <property type="chains" value="E=1-452"/>
</dbReference>
<dbReference type="PDB" id="7QN7">
    <property type="method" value="EM"/>
    <property type="resolution" value="3.00 A"/>
    <property type="chains" value="E=1-452"/>
</dbReference>
<dbReference type="PDB" id="7QN8">
    <property type="method" value="EM"/>
    <property type="resolution" value="3.10 A"/>
    <property type="chains" value="E=1-452"/>
</dbReference>
<dbReference type="PDB" id="7QN9">
    <property type="method" value="EM"/>
    <property type="resolution" value="2.90 A"/>
    <property type="chains" value="E=1-452"/>
</dbReference>
<dbReference type="PDB" id="7QNC">
    <property type="method" value="EM"/>
    <property type="resolution" value="2.90 A"/>
    <property type="chains" value="E=1-452"/>
</dbReference>
<dbReference type="PDB" id="7QND">
    <property type="method" value="EM"/>
    <property type="resolution" value="3.40 A"/>
    <property type="chains" value="E=1-452"/>
</dbReference>
<dbReference type="PDBsum" id="7QN5"/>
<dbReference type="PDBsum" id="7QN6"/>
<dbReference type="PDBsum" id="7QN7"/>
<dbReference type="PDBsum" id="7QN8"/>
<dbReference type="PDBsum" id="7QN9"/>
<dbReference type="PDBsum" id="7QNC"/>
<dbReference type="PDBsum" id="7QND"/>
<dbReference type="EMDB" id="EMD-14067"/>
<dbReference type="EMDB" id="EMD-14068"/>
<dbReference type="EMDB" id="EMD-14069"/>
<dbReference type="EMDB" id="EMD-14070"/>
<dbReference type="EMDB" id="EMD-14071"/>
<dbReference type="EMDB" id="EMD-14074"/>
<dbReference type="EMDB" id="EMD-14075"/>
<dbReference type="SMR" id="O14764"/>
<dbReference type="BioGRID" id="108837">
    <property type="interactions" value="28"/>
</dbReference>
<dbReference type="ComplexPortal" id="CPX-2951">
    <property type="entry name" value="GABA-A receptor, alpha-6/beta-3/delta"/>
</dbReference>
<dbReference type="ComplexPortal" id="CPX-2952">
    <property type="entry name" value="GABA-A receptor, alpha6-beta2-delta"/>
</dbReference>
<dbReference type="ComplexPortal" id="CPX-2953">
    <property type="entry name" value="GABA-A receptor, alpha4-beta2-delta"/>
</dbReference>
<dbReference type="ComplexPortal" id="CPX-2954">
    <property type="entry name" value="GABA-A receptor, alpha4-beta3-delta"/>
</dbReference>
<dbReference type="ComplexPortal" id="CPX-8578">
    <property type="entry name" value="GABA-A receptor, alpha1-beta2-delta"/>
</dbReference>
<dbReference type="ComplexPortal" id="CPX-8732">
    <property type="entry name" value="GABA-A receptor, beta3-delta complex"/>
</dbReference>
<dbReference type="CORUM" id="O14764"/>
<dbReference type="FunCoup" id="O14764">
    <property type="interactions" value="539"/>
</dbReference>
<dbReference type="IntAct" id="O14764">
    <property type="interactions" value="26"/>
</dbReference>
<dbReference type="MINT" id="O14764"/>
<dbReference type="STRING" id="9606.ENSP00000367848"/>
<dbReference type="BindingDB" id="O14764"/>
<dbReference type="ChEMBL" id="CHEMBL3591"/>
<dbReference type="DrugBank" id="DB12537">
    <property type="generic name" value="1,2-Benzodiazepine"/>
</dbReference>
<dbReference type="DrugBank" id="DB00546">
    <property type="generic name" value="Adinazolam"/>
</dbReference>
<dbReference type="DrugBank" id="DB00404">
    <property type="generic name" value="Alprazolam"/>
</dbReference>
<dbReference type="DrugBank" id="DB00543">
    <property type="generic name" value="Amoxapine"/>
</dbReference>
<dbReference type="DrugBank" id="DB11901">
    <property type="generic name" value="Apalutamide"/>
</dbReference>
<dbReference type="DrugBank" id="DB14719">
    <property type="generic name" value="Bentazepam"/>
</dbReference>
<dbReference type="DrugBank" id="DB11859">
    <property type="generic name" value="Brexanolone"/>
</dbReference>
<dbReference type="DrugBank" id="DB01558">
    <property type="generic name" value="Bromazepam"/>
</dbReference>
<dbReference type="DrugBank" id="DB09017">
    <property type="generic name" value="Brotizolam"/>
</dbReference>
<dbReference type="DrugBank" id="DB00237">
    <property type="generic name" value="Butabarbital"/>
</dbReference>
<dbReference type="DrugBank" id="DB00241">
    <property type="generic name" value="Butalbital"/>
</dbReference>
<dbReference type="DrugBank" id="DB01489">
    <property type="generic name" value="Camazepam"/>
</dbReference>
<dbReference type="DrugBank" id="DB00475">
    <property type="generic name" value="Chlordiazepoxide"/>
</dbReference>
<dbReference type="DrugBank" id="DB14715">
    <property type="generic name" value="Cinazepam"/>
</dbReference>
<dbReference type="DrugBank" id="DB01594">
    <property type="generic name" value="Cinolazepam"/>
</dbReference>
<dbReference type="DrugBank" id="DB00349">
    <property type="generic name" value="Clobazam"/>
</dbReference>
<dbReference type="DrugBank" id="DB01068">
    <property type="generic name" value="Clonazepam"/>
</dbReference>
<dbReference type="DrugBank" id="DB00628">
    <property type="generic name" value="Clorazepic acid"/>
</dbReference>
<dbReference type="DrugBank" id="DB01559">
    <property type="generic name" value="Clotiazepam"/>
</dbReference>
<dbReference type="DrugBank" id="DB01553">
    <property type="generic name" value="Cloxazolam"/>
</dbReference>
<dbReference type="DrugBank" id="DB01511">
    <property type="generic name" value="Delorazepam"/>
</dbReference>
<dbReference type="DrugBank" id="DB01189">
    <property type="generic name" value="Desflurane"/>
</dbReference>
<dbReference type="DrugBank" id="DB00829">
    <property type="generic name" value="Diazepam"/>
</dbReference>
<dbReference type="DrugBank" id="DB13837">
    <property type="generic name" value="Doxefazepam"/>
</dbReference>
<dbReference type="DrugBank" id="DB00228">
    <property type="generic name" value="Enflurane"/>
</dbReference>
<dbReference type="DrugBank" id="DB01215">
    <property type="generic name" value="Estazolam"/>
</dbReference>
<dbReference type="DrugBank" id="DB00402">
    <property type="generic name" value="Eszopiclone"/>
</dbReference>
<dbReference type="DrugBank" id="DB00898">
    <property type="generic name" value="Ethanol"/>
</dbReference>
<dbReference type="DrugBank" id="DB00189">
    <property type="generic name" value="Ethchlorvynol"/>
</dbReference>
<dbReference type="DrugBank" id="DB01545">
    <property type="generic name" value="Ethyl loflazepate"/>
</dbReference>
<dbReference type="DrugBank" id="DB09166">
    <property type="generic name" value="Etizolam"/>
</dbReference>
<dbReference type="DrugBank" id="DB00292">
    <property type="generic name" value="Etomidate"/>
</dbReference>
<dbReference type="DrugBank" id="DB01567">
    <property type="generic name" value="Fludiazepam"/>
</dbReference>
<dbReference type="DrugBank" id="DB01205">
    <property type="generic name" value="Flumazenil"/>
</dbReference>
<dbReference type="DrugBank" id="DB01544">
    <property type="generic name" value="Flunitrazepam"/>
</dbReference>
<dbReference type="DrugBank" id="DB00690">
    <property type="generic name" value="Flurazepam"/>
</dbReference>
<dbReference type="DrugBank" id="DB06554">
    <property type="generic name" value="Gaboxadol"/>
</dbReference>
<dbReference type="DrugBank" id="DB05087">
    <property type="generic name" value="Ganaxolone"/>
</dbReference>
<dbReference type="DrugBank" id="DB01437">
    <property type="generic name" value="Glutethimide"/>
</dbReference>
<dbReference type="DrugBank" id="DB00801">
    <property type="generic name" value="Halazepam"/>
</dbReference>
<dbReference type="DrugBank" id="DB01159">
    <property type="generic name" value="Halothane"/>
</dbReference>
<dbReference type="DrugBank" id="DB00753">
    <property type="generic name" value="Isoflurane"/>
</dbReference>
<dbReference type="DrugBank" id="DB01587">
    <property type="generic name" value="Ketazolam"/>
</dbReference>
<dbReference type="DrugBank" id="DB00555">
    <property type="generic name" value="Lamotrigine"/>
</dbReference>
<dbReference type="DrugBank" id="DB13643">
    <property type="generic name" value="Loprazolam"/>
</dbReference>
<dbReference type="DrugBank" id="DB00186">
    <property type="generic name" value="Lorazepam"/>
</dbReference>
<dbReference type="DrugBank" id="DB13872">
    <property type="generic name" value="Lormetazepam"/>
</dbReference>
<dbReference type="DrugBank" id="DB13437">
    <property type="generic name" value="Medazepam"/>
</dbReference>
<dbReference type="DrugBank" id="DB00603">
    <property type="generic name" value="Medroxyprogesterone acetate"/>
</dbReference>
<dbReference type="DrugBank" id="DB01043">
    <property type="generic name" value="Memantine"/>
</dbReference>
<dbReference type="DrugBank" id="DB00371">
    <property type="generic name" value="Meprobamate"/>
</dbReference>
<dbReference type="DrugBank" id="DB00463">
    <property type="generic name" value="Metharbital"/>
</dbReference>
<dbReference type="DrugBank" id="DB01028">
    <property type="generic name" value="Methoxyflurane"/>
</dbReference>
<dbReference type="DrugBank" id="DB01107">
    <property type="generic name" value="Methyprylon"/>
</dbReference>
<dbReference type="DrugBank" id="DB15489">
    <property type="generic name" value="Mexazolam"/>
</dbReference>
<dbReference type="DrugBank" id="DB00683">
    <property type="generic name" value="Midazolam"/>
</dbReference>
<dbReference type="DrugBank" id="DB01595">
    <property type="generic name" value="Nitrazepam"/>
</dbReference>
<dbReference type="DrugBank" id="DB14028">
    <property type="generic name" value="Nordazepam"/>
</dbReference>
<dbReference type="DrugBank" id="DB00842">
    <property type="generic name" value="Oxazepam"/>
</dbReference>
<dbReference type="DrugBank" id="DB14672">
    <property type="generic name" value="Oxazepam acetate"/>
</dbReference>
<dbReference type="DrugBank" id="DB00312">
    <property type="generic name" value="Pentobarbital"/>
</dbReference>
<dbReference type="DrugBank" id="DB00252">
    <property type="generic name" value="Phenytoin"/>
</dbReference>
<dbReference type="DrugBank" id="DB13335">
    <property type="generic name" value="Pinazepam"/>
</dbReference>
<dbReference type="DrugBank" id="DB01708">
    <property type="generic name" value="Prasterone"/>
</dbReference>
<dbReference type="DrugBank" id="DB01588">
    <property type="generic name" value="Prazepam"/>
</dbReference>
<dbReference type="DrugBank" id="DB00794">
    <property type="generic name" value="Primidone"/>
</dbReference>
<dbReference type="DrugBank" id="DB00818">
    <property type="generic name" value="Propofol"/>
</dbReference>
<dbReference type="DrugBank" id="DB01589">
    <property type="generic name" value="Quazepam"/>
</dbReference>
<dbReference type="DrugBank" id="DB12404">
    <property type="generic name" value="Remimazolam"/>
</dbReference>
<dbReference type="DrugBank" id="DB01236">
    <property type="generic name" value="Sevoflurane"/>
</dbReference>
<dbReference type="DrugBank" id="DB09118">
    <property type="generic name" value="Stiripentol"/>
</dbReference>
<dbReference type="DrugBank" id="DB00306">
    <property type="generic name" value="Talbutal"/>
</dbReference>
<dbReference type="DrugBank" id="DB01956">
    <property type="generic name" value="Taurine"/>
</dbReference>
<dbReference type="DrugBank" id="DB00231">
    <property type="generic name" value="Temazepam"/>
</dbReference>
<dbReference type="DrugBank" id="DB11582">
    <property type="generic name" value="Thiocolchicoside"/>
</dbReference>
<dbReference type="DrugBank" id="DB00897">
    <property type="generic name" value="Triazolam"/>
</dbReference>
<dbReference type="DrugBank" id="DB15490">
    <property type="generic name" value="Zuranolone"/>
</dbReference>
<dbReference type="DrugCentral" id="O14764"/>
<dbReference type="GlyCosmos" id="O14764">
    <property type="glycosylation" value="2 sites, No reported glycans"/>
</dbReference>
<dbReference type="GlyGen" id="O14764">
    <property type="glycosylation" value="3 sites, 2 N-linked glycans (2 sites), 1 O-linked glycan (1 site)"/>
</dbReference>
<dbReference type="iPTMnet" id="O14764"/>
<dbReference type="PhosphoSitePlus" id="O14764"/>
<dbReference type="BioMuta" id="GABRD"/>
<dbReference type="MassIVE" id="O14764"/>
<dbReference type="PaxDb" id="9606-ENSP00000367848"/>
<dbReference type="PeptideAtlas" id="O14764"/>
<dbReference type="ProteomicsDB" id="48213"/>
<dbReference type="Antibodypedia" id="12525">
    <property type="antibodies" value="251 antibodies from 32 providers"/>
</dbReference>
<dbReference type="DNASU" id="2563"/>
<dbReference type="Ensembl" id="ENST00000378585.7">
    <property type="protein sequence ID" value="ENSP00000367848.4"/>
    <property type="gene ID" value="ENSG00000187730.9"/>
</dbReference>
<dbReference type="GeneID" id="2563"/>
<dbReference type="KEGG" id="hsa:2563"/>
<dbReference type="MANE-Select" id="ENST00000378585.7">
    <property type="protein sequence ID" value="ENSP00000367848.4"/>
    <property type="RefSeq nucleotide sequence ID" value="NM_000815.5"/>
    <property type="RefSeq protein sequence ID" value="NP_000806.2"/>
</dbReference>
<dbReference type="UCSC" id="uc001aip.3">
    <property type="organism name" value="human"/>
</dbReference>
<dbReference type="AGR" id="HGNC:4084"/>
<dbReference type="CTD" id="2563"/>
<dbReference type="DisGeNET" id="2563"/>
<dbReference type="GeneCards" id="GABRD"/>
<dbReference type="HGNC" id="HGNC:4084">
    <property type="gene designation" value="GABRD"/>
</dbReference>
<dbReference type="HPA" id="ENSG00000187730">
    <property type="expression patterns" value="Tissue enriched (brain)"/>
</dbReference>
<dbReference type="MalaCards" id="GABRD"/>
<dbReference type="MIM" id="137163">
    <property type="type" value="gene"/>
</dbReference>
<dbReference type="MIM" id="613060">
    <property type="type" value="phenotype"/>
</dbReference>
<dbReference type="neXtProt" id="NX_O14764"/>
<dbReference type="OpenTargets" id="ENSG00000187730"/>
<dbReference type="Orphanet" id="1606">
    <property type="disease" value="1p36 deletion syndrome"/>
</dbReference>
<dbReference type="Orphanet" id="36387">
    <property type="disease" value="Genetic epilepsy with febrile seizure plus"/>
</dbReference>
<dbReference type="Orphanet" id="307">
    <property type="disease" value="Juvenile myoclonic epilepsy"/>
</dbReference>
<dbReference type="PharmGKB" id="PA28498"/>
<dbReference type="VEuPathDB" id="HostDB:ENSG00000187730"/>
<dbReference type="eggNOG" id="KOG3643">
    <property type="taxonomic scope" value="Eukaryota"/>
</dbReference>
<dbReference type="GeneTree" id="ENSGT00940000160122"/>
<dbReference type="HOGENOM" id="CLU_010920_0_1_1"/>
<dbReference type="InParanoid" id="O14764"/>
<dbReference type="OrthoDB" id="8890589at2759"/>
<dbReference type="PAN-GO" id="O14764">
    <property type="GO annotations" value="13 GO annotations based on evolutionary models"/>
</dbReference>
<dbReference type="PhylomeDB" id="O14764"/>
<dbReference type="TreeFam" id="TF315453"/>
<dbReference type="PathwayCommons" id="O14764"/>
<dbReference type="SignaLink" id="O14764"/>
<dbReference type="SIGNOR" id="O14764"/>
<dbReference type="BioGRID-ORCS" id="2563">
    <property type="hits" value="8 hits in 1156 CRISPR screens"/>
</dbReference>
<dbReference type="GeneWiki" id="GABRD"/>
<dbReference type="GenomeRNAi" id="2563"/>
<dbReference type="Pharos" id="O14764">
    <property type="development level" value="Tclin"/>
</dbReference>
<dbReference type="PRO" id="PR:O14764"/>
<dbReference type="Proteomes" id="UP000005640">
    <property type="component" value="Chromosome 1"/>
</dbReference>
<dbReference type="RNAct" id="O14764">
    <property type="molecule type" value="protein"/>
</dbReference>
<dbReference type="Bgee" id="ENSG00000187730">
    <property type="expression patterns" value="Expressed in right hemisphere of cerebellum and 109 other cell types or tissues"/>
</dbReference>
<dbReference type="ExpressionAtlas" id="O14764">
    <property type="expression patterns" value="baseline and differential"/>
</dbReference>
<dbReference type="GO" id="GO:0030424">
    <property type="term" value="C:axon"/>
    <property type="evidence" value="ECO:0007669"/>
    <property type="project" value="Ensembl"/>
</dbReference>
<dbReference type="GO" id="GO:0034707">
    <property type="term" value="C:chloride channel complex"/>
    <property type="evidence" value="ECO:0007669"/>
    <property type="project" value="UniProtKB-KW"/>
</dbReference>
<dbReference type="GO" id="GO:0030425">
    <property type="term" value="C:dendrite"/>
    <property type="evidence" value="ECO:0007669"/>
    <property type="project" value="Ensembl"/>
</dbReference>
<dbReference type="GO" id="GO:1902711">
    <property type="term" value="C:GABA-A receptor complex"/>
    <property type="evidence" value="ECO:0000353"/>
    <property type="project" value="ComplexPortal"/>
</dbReference>
<dbReference type="GO" id="GO:0098982">
    <property type="term" value="C:GABA-ergic synapse"/>
    <property type="evidence" value="ECO:0007669"/>
    <property type="project" value="Ensembl"/>
</dbReference>
<dbReference type="GO" id="GO:0098978">
    <property type="term" value="C:glutamatergic synapse"/>
    <property type="evidence" value="ECO:0007669"/>
    <property type="project" value="Ensembl"/>
</dbReference>
<dbReference type="GO" id="GO:0043025">
    <property type="term" value="C:neuronal cell body"/>
    <property type="evidence" value="ECO:0007669"/>
    <property type="project" value="Ensembl"/>
</dbReference>
<dbReference type="GO" id="GO:0005886">
    <property type="term" value="C:plasma membrane"/>
    <property type="evidence" value="ECO:0000250"/>
    <property type="project" value="UniProtKB"/>
</dbReference>
<dbReference type="GO" id="GO:0045211">
    <property type="term" value="C:postsynaptic membrane"/>
    <property type="evidence" value="ECO:0007669"/>
    <property type="project" value="Ensembl"/>
</dbReference>
<dbReference type="GO" id="GO:0005254">
    <property type="term" value="F:chloride channel activity"/>
    <property type="evidence" value="ECO:0007669"/>
    <property type="project" value="UniProtKB-KW"/>
</dbReference>
<dbReference type="GO" id="GO:0004890">
    <property type="term" value="F:GABA-A receptor activity"/>
    <property type="evidence" value="ECO:0000318"/>
    <property type="project" value="GO_Central"/>
</dbReference>
<dbReference type="GO" id="GO:1904315">
    <property type="term" value="F:transmitter-gated monoatomic ion channel activity involved in regulation of postsynaptic membrane potential"/>
    <property type="evidence" value="ECO:0007669"/>
    <property type="project" value="Ensembl"/>
</dbReference>
<dbReference type="GO" id="GO:1902476">
    <property type="term" value="P:chloride transmembrane transport"/>
    <property type="evidence" value="ECO:0000314"/>
    <property type="project" value="ComplexPortal"/>
</dbReference>
<dbReference type="GO" id="GO:0007214">
    <property type="term" value="P:gamma-aminobutyric acid signaling pathway"/>
    <property type="evidence" value="ECO:0000314"/>
    <property type="project" value="ComplexPortal"/>
</dbReference>
<dbReference type="GO" id="GO:0007165">
    <property type="term" value="P:signal transduction"/>
    <property type="evidence" value="ECO:0000304"/>
    <property type="project" value="ProtInc"/>
</dbReference>
<dbReference type="GO" id="GO:0051932">
    <property type="term" value="P:synaptic transmission, GABAergic"/>
    <property type="evidence" value="ECO:0000303"/>
    <property type="project" value="ComplexPortal"/>
</dbReference>
<dbReference type="CDD" id="cd19001">
    <property type="entry name" value="LGIC_ECD_GABAAR_delta"/>
    <property type="match status" value="1"/>
</dbReference>
<dbReference type="CDD" id="cd19055">
    <property type="entry name" value="LGIC_TM_GABAAR_delta"/>
    <property type="match status" value="1"/>
</dbReference>
<dbReference type="FunFam" id="1.20.58.390:FF:000015">
    <property type="entry name" value="Gamma-aminobutyric acid (GABA-A) receptor, subunit delta"/>
    <property type="match status" value="1"/>
</dbReference>
<dbReference type="FunFam" id="2.70.170.10:FF:000018">
    <property type="entry name" value="Gamma-aminobutyric acid (GABA-A) receptor, subunit delta"/>
    <property type="match status" value="1"/>
</dbReference>
<dbReference type="Gene3D" id="2.70.170.10">
    <property type="entry name" value="Neurotransmitter-gated ion-channel ligand-binding domain"/>
    <property type="match status" value="1"/>
</dbReference>
<dbReference type="Gene3D" id="1.20.58.390">
    <property type="entry name" value="Neurotransmitter-gated ion-channel transmembrane domain"/>
    <property type="match status" value="1"/>
</dbReference>
<dbReference type="InterPro" id="IPR006028">
    <property type="entry name" value="GABAA/Glycine_rcpt"/>
</dbReference>
<dbReference type="InterPro" id="IPR008098">
    <property type="entry name" value="GABAAd_rcpt"/>
</dbReference>
<dbReference type="InterPro" id="IPR006202">
    <property type="entry name" value="Neur_chan_lig-bd"/>
</dbReference>
<dbReference type="InterPro" id="IPR036734">
    <property type="entry name" value="Neur_chan_lig-bd_sf"/>
</dbReference>
<dbReference type="InterPro" id="IPR006201">
    <property type="entry name" value="Neur_channel"/>
</dbReference>
<dbReference type="InterPro" id="IPR036719">
    <property type="entry name" value="Neuro-gated_channel_TM_sf"/>
</dbReference>
<dbReference type="InterPro" id="IPR038050">
    <property type="entry name" value="Neuro_actylchol_rec"/>
</dbReference>
<dbReference type="InterPro" id="IPR006029">
    <property type="entry name" value="Neurotrans-gated_channel_TM"/>
</dbReference>
<dbReference type="InterPro" id="IPR018000">
    <property type="entry name" value="Neurotransmitter_ion_chnl_CS"/>
</dbReference>
<dbReference type="NCBIfam" id="TIGR00860">
    <property type="entry name" value="LIC"/>
    <property type="match status" value="1"/>
</dbReference>
<dbReference type="PANTHER" id="PTHR18945">
    <property type="entry name" value="NEUROTRANSMITTER GATED ION CHANNEL"/>
    <property type="match status" value="1"/>
</dbReference>
<dbReference type="Pfam" id="PF02931">
    <property type="entry name" value="Neur_chan_LBD"/>
    <property type="match status" value="1"/>
</dbReference>
<dbReference type="Pfam" id="PF02932">
    <property type="entry name" value="Neur_chan_memb"/>
    <property type="match status" value="1"/>
</dbReference>
<dbReference type="PRINTS" id="PR01722">
    <property type="entry name" value="GABAARDELTA"/>
</dbReference>
<dbReference type="PRINTS" id="PR00253">
    <property type="entry name" value="GABAARECEPTR"/>
</dbReference>
<dbReference type="PRINTS" id="PR00252">
    <property type="entry name" value="NRIONCHANNEL"/>
</dbReference>
<dbReference type="SUPFAM" id="SSF90112">
    <property type="entry name" value="Neurotransmitter-gated ion-channel transmembrane pore"/>
    <property type="match status" value="1"/>
</dbReference>
<dbReference type="SUPFAM" id="SSF63712">
    <property type="entry name" value="Nicotinic receptor ligand binding domain-like"/>
    <property type="match status" value="1"/>
</dbReference>
<dbReference type="PROSITE" id="PS00236">
    <property type="entry name" value="NEUROTR_ION_CHANNEL"/>
    <property type="match status" value="1"/>
</dbReference>
<organism>
    <name type="scientific">Homo sapiens</name>
    <name type="common">Human</name>
    <dbReference type="NCBI Taxonomy" id="9606"/>
    <lineage>
        <taxon>Eukaryota</taxon>
        <taxon>Metazoa</taxon>
        <taxon>Chordata</taxon>
        <taxon>Craniata</taxon>
        <taxon>Vertebrata</taxon>
        <taxon>Euteleostomi</taxon>
        <taxon>Mammalia</taxon>
        <taxon>Eutheria</taxon>
        <taxon>Euarchontoglires</taxon>
        <taxon>Primates</taxon>
        <taxon>Haplorrhini</taxon>
        <taxon>Catarrhini</taxon>
        <taxon>Hominidae</taxon>
        <taxon>Homo</taxon>
    </lineage>
</organism>
<gene>
    <name evidence="10" type="primary">GABRD</name>
</gene>
<feature type="signal peptide" evidence="2">
    <location>
        <begin position="1"/>
        <end position="24"/>
    </location>
</feature>
<feature type="chain" id="PRO_0000000468" description="Gamma-aminobutyric acid receptor subunit delta">
    <location>
        <begin position="25"/>
        <end position="452"/>
    </location>
</feature>
<feature type="topological domain" description="Extracellular" evidence="9">
    <location>
        <begin position="25"/>
        <end position="251"/>
    </location>
</feature>
<feature type="transmembrane region" description="Helical" evidence="6 13">
    <location>
        <begin position="252"/>
        <end position="271"/>
    </location>
</feature>
<feature type="topological domain" description="Cytoplasmic" evidence="9">
    <location>
        <begin position="272"/>
        <end position="275"/>
    </location>
</feature>
<feature type="transmembrane region" description="Helical" evidence="6 13">
    <location>
        <begin position="276"/>
        <end position="298"/>
    </location>
</feature>
<feature type="topological domain" description="Extracellular" evidence="9">
    <location>
        <begin position="299"/>
        <end position="308"/>
    </location>
</feature>
<feature type="transmembrane region" description="Helical" evidence="6 13">
    <location>
        <begin position="309"/>
        <end position="331"/>
    </location>
</feature>
<feature type="topological domain" description="Cytoplasmic" evidence="9">
    <location>
        <begin position="332"/>
        <end position="426"/>
    </location>
</feature>
<feature type="transmembrane region" description="Helical" evidence="6 13">
    <location>
        <begin position="427"/>
        <end position="449"/>
    </location>
</feature>
<feature type="topological domain" description="Extracellular" evidence="9">
    <location>
        <begin position="450"/>
        <end position="452"/>
    </location>
</feature>
<feature type="modified residue" description="Phosphoserine" evidence="1">
    <location>
        <position position="390"/>
    </location>
</feature>
<feature type="glycosylation site" description="N-linked (GlcNAc...) asparagine" evidence="6 13">
    <location>
        <position position="103"/>
    </location>
</feature>
<feature type="glycosylation site" description="N-linked (GlcNAc...) asparagine" evidence="2">
    <location>
        <position position="106"/>
    </location>
</feature>
<feature type="disulfide bond" evidence="6 13">
    <location>
        <begin position="164"/>
        <end position="178"/>
    </location>
</feature>
<feature type="sequence variant" id="VAR_079270" evidence="5">
    <original>P</original>
    <variation>S</variation>
    <location>
        <position position="62"/>
    </location>
</feature>
<feature type="sequence variant" id="VAR_043151" description="In GEFSP5; reduced receptor current amplitudes; dbSNP:rs121434580." evidence="3">
    <original>E</original>
    <variation>A</variation>
    <location>
        <position position="177"/>
    </location>
</feature>
<feature type="sequence variant" id="VAR_043152" description="In GEFSP5; uncertain significance; does not affect receptor current amplitudes; dbSNP:rs139300921." evidence="3">
    <original>R</original>
    <variation>C</variation>
    <location>
        <position position="220"/>
    </location>
</feature>
<feature type="sequence variant" id="VAR_043153" description="Reduced receptor current amplitudes; dbSNP:rs41307846." evidence="3 7">
    <original>R</original>
    <variation>H</variation>
    <location>
        <position position="220"/>
    </location>
</feature>
<feature type="sequence variant" id="VAR_078225" description="Found in a patient with childhood onset epileptic encephalopathy; uncertain significance; dbSNP:rs1057519556." evidence="4">
    <original>V</original>
    <variation>I</variation>
    <location>
        <position position="370"/>
    </location>
</feature>
<feature type="helix" evidence="18">
    <location>
        <begin position="43"/>
        <end position="48"/>
    </location>
</feature>
<feature type="turn" evidence="18">
    <location>
        <begin position="57"/>
        <end position="60"/>
    </location>
</feature>
<feature type="strand" evidence="18">
    <location>
        <begin position="64"/>
        <end position="79"/>
    </location>
</feature>
<feature type="turn" evidence="18">
    <location>
        <begin position="80"/>
        <end position="83"/>
    </location>
</feature>
<feature type="strand" evidence="18">
    <location>
        <begin position="84"/>
        <end position="96"/>
    </location>
</feature>
<feature type="helix" evidence="18">
    <location>
        <begin position="98"/>
        <end position="100"/>
    </location>
</feature>
<feature type="strand" evidence="18">
    <location>
        <begin position="109"/>
        <end position="111"/>
    </location>
</feature>
<feature type="helix" evidence="18">
    <location>
        <begin position="113"/>
        <end position="118"/>
    </location>
</feature>
<feature type="strand" evidence="18">
    <location>
        <begin position="124"/>
        <end position="126"/>
    </location>
</feature>
<feature type="strand" evidence="18">
    <location>
        <begin position="129"/>
        <end position="134"/>
    </location>
</feature>
<feature type="strand" evidence="18">
    <location>
        <begin position="137"/>
        <end position="139"/>
    </location>
</feature>
<feature type="strand" evidence="18">
    <location>
        <begin position="142"/>
        <end position="146"/>
    </location>
</feature>
<feature type="strand" evidence="18">
    <location>
        <begin position="150"/>
        <end position="163"/>
    </location>
</feature>
<feature type="turn" evidence="18">
    <location>
        <begin position="169"/>
        <end position="172"/>
    </location>
</feature>
<feature type="strand" evidence="18">
    <location>
        <begin position="175"/>
        <end position="186"/>
    </location>
</feature>
<feature type="turn" evidence="18">
    <location>
        <begin position="189"/>
        <end position="191"/>
    </location>
</feature>
<feature type="strand" evidence="18">
    <location>
        <begin position="192"/>
        <end position="196"/>
    </location>
</feature>
<feature type="helix" evidence="18">
    <location>
        <begin position="200"/>
        <end position="203"/>
    </location>
</feature>
<feature type="turn" evidence="18">
    <location>
        <begin position="206"/>
        <end position="208"/>
    </location>
</feature>
<feature type="strand" evidence="18">
    <location>
        <begin position="212"/>
        <end position="225"/>
    </location>
</feature>
<feature type="strand" evidence="18">
    <location>
        <begin position="230"/>
        <end position="232"/>
    </location>
</feature>
<feature type="strand" evidence="18">
    <location>
        <begin position="236"/>
        <end position="245"/>
    </location>
</feature>
<feature type="helix" evidence="18">
    <location>
        <begin position="249"/>
        <end position="270"/>
    </location>
</feature>
<feature type="helix" evidence="18">
    <location>
        <begin position="276"/>
        <end position="299"/>
    </location>
</feature>
<feature type="helix" evidence="18">
    <location>
        <begin position="309"/>
        <end position="334"/>
    </location>
</feature>
<feature type="helix" evidence="18">
    <location>
        <begin position="425"/>
        <end position="449"/>
    </location>
</feature>
<proteinExistence type="evidence at protein level"/>
<sequence>MDAPARLLAPLLLLCAQQLRGTRAMNDIGDYVGSNLEISWLPNLDGLIAGYARNFRPGIGGPPVNVALALEVASIDHISEANMEYTMTVFLHQSWRDSRLSYNHTNETLGLDSRFVDKLWLPDTFIVNAKSAWFHDVTVENKLIRLQPDGVILYSIRITSTVACDMDLAKYPMDEQECMLDLESYGYSSEDIVYYWSESQEHIHGLDKLQLAQFTITSYRFTTELMNFKSAGQFPRLSLHFHLRRNRGVYIIQSYMPSVLLVAMSWVSFWISQAAVPARVSLGITTVLTMTTLMVSARSSLPRASAIKALDVYFWICYVFVFAALVEYAFAHFNADYRKKQKAKVKVSRPRAEMDVRNAIVLFSLSAAGVTQELAISRRQRRVPGNLMGSYRSVGVETGETKKEGAARSGGQGGIRARLRPIDADTIDIYARAVFPAAFAAVNVIYWAAYAM</sequence>
<reference key="1">
    <citation type="submission" date="1997-08" db="EMBL/GenBank/DDBJ databases">
        <authorList>
            <person name="Day T.M."/>
            <person name="Hartnett C."/>
            <person name="Blankenbiller K."/>
            <person name="Ramabhadran T.V."/>
        </authorList>
    </citation>
    <scope>NUCLEOTIDE SEQUENCE [MRNA]</scope>
    <scope>VARIANT HIS-220</scope>
</reference>
<reference key="2">
    <citation type="journal article" date="2006" name="Nature">
        <title>The DNA sequence and biological annotation of human chromosome 1.</title>
        <authorList>
            <person name="Gregory S.G."/>
            <person name="Barlow K.F."/>
            <person name="McLay K.E."/>
            <person name="Kaul R."/>
            <person name="Swarbreck D."/>
            <person name="Dunham A."/>
            <person name="Scott C.E."/>
            <person name="Howe K.L."/>
            <person name="Woodfine K."/>
            <person name="Spencer C.C.A."/>
            <person name="Jones M.C."/>
            <person name="Gillson C."/>
            <person name="Searle S."/>
            <person name="Zhou Y."/>
            <person name="Kokocinski F."/>
            <person name="McDonald L."/>
            <person name="Evans R."/>
            <person name="Phillips K."/>
            <person name="Atkinson A."/>
            <person name="Cooper R."/>
            <person name="Jones C."/>
            <person name="Hall R.E."/>
            <person name="Andrews T.D."/>
            <person name="Lloyd C."/>
            <person name="Ainscough R."/>
            <person name="Almeida J.P."/>
            <person name="Ambrose K.D."/>
            <person name="Anderson F."/>
            <person name="Andrew R.W."/>
            <person name="Ashwell R.I.S."/>
            <person name="Aubin K."/>
            <person name="Babbage A.K."/>
            <person name="Bagguley C.L."/>
            <person name="Bailey J."/>
            <person name="Beasley H."/>
            <person name="Bethel G."/>
            <person name="Bird C.P."/>
            <person name="Bray-Allen S."/>
            <person name="Brown J.Y."/>
            <person name="Brown A.J."/>
            <person name="Buckley D."/>
            <person name="Burton J."/>
            <person name="Bye J."/>
            <person name="Carder C."/>
            <person name="Chapman J.C."/>
            <person name="Clark S.Y."/>
            <person name="Clarke G."/>
            <person name="Clee C."/>
            <person name="Cobley V."/>
            <person name="Collier R.E."/>
            <person name="Corby N."/>
            <person name="Coville G.J."/>
            <person name="Davies J."/>
            <person name="Deadman R."/>
            <person name="Dunn M."/>
            <person name="Earthrowl M."/>
            <person name="Ellington A.G."/>
            <person name="Errington H."/>
            <person name="Frankish A."/>
            <person name="Frankland J."/>
            <person name="French L."/>
            <person name="Garner P."/>
            <person name="Garnett J."/>
            <person name="Gay L."/>
            <person name="Ghori M.R.J."/>
            <person name="Gibson R."/>
            <person name="Gilby L.M."/>
            <person name="Gillett W."/>
            <person name="Glithero R.J."/>
            <person name="Grafham D.V."/>
            <person name="Griffiths C."/>
            <person name="Griffiths-Jones S."/>
            <person name="Grocock R."/>
            <person name="Hammond S."/>
            <person name="Harrison E.S.I."/>
            <person name="Hart E."/>
            <person name="Haugen E."/>
            <person name="Heath P.D."/>
            <person name="Holmes S."/>
            <person name="Holt K."/>
            <person name="Howden P.J."/>
            <person name="Hunt A.R."/>
            <person name="Hunt S.E."/>
            <person name="Hunter G."/>
            <person name="Isherwood J."/>
            <person name="James R."/>
            <person name="Johnson C."/>
            <person name="Johnson D."/>
            <person name="Joy A."/>
            <person name="Kay M."/>
            <person name="Kershaw J.K."/>
            <person name="Kibukawa M."/>
            <person name="Kimberley A.M."/>
            <person name="King A."/>
            <person name="Knights A.J."/>
            <person name="Lad H."/>
            <person name="Laird G."/>
            <person name="Lawlor S."/>
            <person name="Leongamornlert D.A."/>
            <person name="Lloyd D.M."/>
            <person name="Loveland J."/>
            <person name="Lovell J."/>
            <person name="Lush M.J."/>
            <person name="Lyne R."/>
            <person name="Martin S."/>
            <person name="Mashreghi-Mohammadi M."/>
            <person name="Matthews L."/>
            <person name="Matthews N.S.W."/>
            <person name="McLaren S."/>
            <person name="Milne S."/>
            <person name="Mistry S."/>
            <person name="Moore M.J.F."/>
            <person name="Nickerson T."/>
            <person name="O'Dell C.N."/>
            <person name="Oliver K."/>
            <person name="Palmeiri A."/>
            <person name="Palmer S.A."/>
            <person name="Parker A."/>
            <person name="Patel D."/>
            <person name="Pearce A.V."/>
            <person name="Peck A.I."/>
            <person name="Pelan S."/>
            <person name="Phelps K."/>
            <person name="Phillimore B.J."/>
            <person name="Plumb R."/>
            <person name="Rajan J."/>
            <person name="Raymond C."/>
            <person name="Rouse G."/>
            <person name="Saenphimmachak C."/>
            <person name="Sehra H.K."/>
            <person name="Sheridan E."/>
            <person name="Shownkeen R."/>
            <person name="Sims S."/>
            <person name="Skuce C.D."/>
            <person name="Smith M."/>
            <person name="Steward C."/>
            <person name="Subramanian S."/>
            <person name="Sycamore N."/>
            <person name="Tracey A."/>
            <person name="Tromans A."/>
            <person name="Van Helmond Z."/>
            <person name="Wall M."/>
            <person name="Wallis J.M."/>
            <person name="White S."/>
            <person name="Whitehead S.L."/>
            <person name="Wilkinson J.E."/>
            <person name="Willey D.L."/>
            <person name="Williams H."/>
            <person name="Wilming L."/>
            <person name="Wray P.W."/>
            <person name="Wu Z."/>
            <person name="Coulson A."/>
            <person name="Vaudin M."/>
            <person name="Sulston J.E."/>
            <person name="Durbin R.M."/>
            <person name="Hubbard T."/>
            <person name="Wooster R."/>
            <person name="Dunham I."/>
            <person name="Carter N.P."/>
            <person name="McVean G."/>
            <person name="Ross M.T."/>
            <person name="Harrow J."/>
            <person name="Olson M.V."/>
            <person name="Beck S."/>
            <person name="Rogers J."/>
            <person name="Bentley D.R."/>
        </authorList>
    </citation>
    <scope>NUCLEOTIDE SEQUENCE [LARGE SCALE GENOMIC DNA]</scope>
</reference>
<reference key="3">
    <citation type="journal article" date="2004" name="Genome Res.">
        <title>The status, quality, and expansion of the NIH full-length cDNA project: the Mammalian Gene Collection (MGC).</title>
        <authorList>
            <consortium name="The MGC Project Team"/>
        </authorList>
    </citation>
    <scope>NUCLEOTIDE SEQUENCE [LARGE SCALE MRNA]</scope>
    <source>
        <tissue>Brain</tissue>
    </source>
</reference>
<reference evidence="11 12 13 14 15 16 17" key="4">
    <citation type="journal article" date="2022" name="Nature">
        <title>Differential assembly diversifies GABAA receptor structures and signalling.</title>
        <authorList>
            <person name="Sente A."/>
            <person name="Desai R."/>
            <person name="Naydenova K."/>
            <person name="Malinauskas T."/>
            <person name="Jounaidi Y."/>
            <person name="Miehling J."/>
            <person name="Zhou X."/>
            <person name="Masiulis S."/>
            <person name="Hardwick S.W."/>
            <person name="Chirgadze D.Y."/>
            <person name="Miller K.W."/>
            <person name="Aricescu A.R."/>
        </authorList>
    </citation>
    <scope>STRUCTURE BY ELECTRON MICROSCOPY (2.50 ANGSTROMS)</scope>
    <scope>FUNCTION</scope>
    <scope>TRANSPORTER ACTIVITY</scope>
    <scope>SUBUNIT</scope>
    <scope>INTERACTION WITH GABRA4 AND GABRB3</scope>
    <scope>SUBCELLULAR LOCATION</scope>
    <scope>DISULFIDE BOND</scope>
    <scope>GLYCOSYLATION AT ASN-103</scope>
</reference>
<reference key="5">
    <citation type="journal article" date="2004" name="Hum. Mol. Genet.">
        <title>GABRD encoding a protein for extra- or peri-synaptic GABAA receptors is a susceptibility locus for generalized epilepsies.</title>
        <authorList>
            <person name="Dibbens L.M."/>
            <person name="Feng H.-J."/>
            <person name="Richards M.C."/>
            <person name="Harkin L.A."/>
            <person name="Hodgson B.L."/>
            <person name="Scott D."/>
            <person name="Jenkins M."/>
            <person name="Petrou S."/>
            <person name="Sutherland G.R."/>
            <person name="Scheffer I.E."/>
            <person name="Berkovic S.F."/>
            <person name="Macdonald R.L."/>
            <person name="Mulley J.C."/>
        </authorList>
    </citation>
    <scope>VARIANTS GEFSP5 ALA-177 AND CYS-220</scope>
    <scope>VARIANT HIS-220</scope>
    <scope>CHARACTERIZATION OF VARIANTS GEFSP5 ALA-177 AND CYS-220</scope>
    <scope>CHARACTERIZATION OF VARIANT HIS-220</scope>
</reference>
<reference key="6">
    <citation type="journal article" date="2017" name="Hum. Mutat.">
        <title>Diagnostic targeted resequencing in 349 patients with drug-resistant pediatric epilepsies identifies causative mutations in 30 different genes.</title>
        <authorList>
            <consortium name="Clinical Study Group"/>
            <person name="Parrini E."/>
            <person name="Marini C."/>
            <person name="Mei D."/>
            <person name="Galuppi A."/>
            <person name="Cellini E."/>
            <person name="Pucatti D."/>
            <person name="Chiti L."/>
            <person name="Rutigliano D."/>
            <person name="Bianchini C."/>
            <person name="Virdo S."/>
            <person name="De Vita D."/>
            <person name="Bigoni S."/>
            <person name="Barba C."/>
            <person name="Mari F."/>
            <person name="Montomoli M."/>
            <person name="Pisano T."/>
            <person name="Rosati A."/>
            <person name="Guerrini R."/>
        </authorList>
    </citation>
    <scope>VARIANT ILE-370</scope>
</reference>
<reference key="7">
    <citation type="journal article" date="2017" name="J. Am. Soc. Nephrol.">
        <title>MAGI2 mutations cause congenital nephrotic syndrome.</title>
        <authorList>
            <consortium name="NephroS"/>
            <consortium name="UK study of Nephrotic Syndrome"/>
            <person name="Bierzynska A."/>
            <person name="Soderquest K."/>
            <person name="Dean P."/>
            <person name="Colby E."/>
            <person name="Rollason R."/>
            <person name="Jones C."/>
            <person name="Inward C.D."/>
            <person name="McCarthy H.J."/>
            <person name="Simpson M.A."/>
            <person name="Lord G.M."/>
            <person name="Williams M."/>
            <person name="Welsh G.I."/>
            <person name="Koziell A.B."/>
            <person name="Saleem M.A."/>
        </authorList>
    </citation>
    <scope>VARIANT SER-62</scope>
</reference>
<keyword id="KW-0002">3D-structure</keyword>
<keyword id="KW-1003">Cell membrane</keyword>
<keyword id="KW-0868">Chloride</keyword>
<keyword id="KW-0869">Chloride channel</keyword>
<keyword id="KW-0225">Disease variant</keyword>
<keyword id="KW-1015">Disulfide bond</keyword>
<keyword id="KW-0887">Epilepsy</keyword>
<keyword id="KW-0325">Glycoprotein</keyword>
<keyword id="KW-0407">Ion channel</keyword>
<keyword id="KW-0406">Ion transport</keyword>
<keyword id="KW-0472">Membrane</keyword>
<keyword id="KW-0597">Phosphoprotein</keyword>
<keyword id="KW-1267">Proteomics identification</keyword>
<keyword id="KW-1185">Reference proteome</keyword>
<keyword id="KW-0732">Signal</keyword>
<keyword id="KW-0812">Transmembrane</keyword>
<keyword id="KW-1133">Transmembrane helix</keyword>
<keyword id="KW-0813">Transport</keyword>
<comment type="function">
    <text evidence="1 6">Delta subunit of the heteropentameric ligand-gated chloride channel gated by gamma-aminobutyric acid (GABA), a major inhibitory neurotransmitter in the brain (PubMed:35355020). GABA-gated chloride channels, also named GABA(A) receptors (GABAAR), consist of five subunits arranged around a central pore and contain GABA active binding site(s) located at the alpha and beta subunit interface(s) (PubMed:35355020). When activated by GABA, GABAARs selectively allow the flow of chloride anions across the cell membrane down their electrochemical gradient (PubMed:35355020). GABAARs containing delta/GABRD subunits are predominantly located in extrasynaptic or perisynaptic positions on hippocampus and cerebellar granule cells, and contribute to the tonic GABAergic inhibition (By similarity). GABAAR containing alpha-4-beta-3-delta subunits can simultaneously bind GABA and histamine where histamine binds at the interface of two neighboring beta subunits, which may be involved in the regulation of sleep and wakefulness (PubMed:35355020).</text>
</comment>
<comment type="catalytic activity">
    <reaction evidence="6">
        <text>chloride(in) = chloride(out)</text>
        <dbReference type="Rhea" id="RHEA:29823"/>
        <dbReference type="ChEBI" id="CHEBI:17996"/>
    </reaction>
</comment>
<comment type="subunit">
    <text evidence="6">Heteropentamer, formed by a combination of alpha (GABRA1-6), beta (GABRB1-3), gamma (GABRG1-3), delta (GABRD), epsilon (GABRE), rho (GABRR1-3), pi (GABRP) and theta (GABRQ) chains, each subunit exhibiting distinct physiological and pharmacological properties.</text>
</comment>
<comment type="interaction">
    <interactant intactId="EBI-744352">
        <id>O14764</id>
    </interactant>
    <interactant intactId="EBI-724076">
        <id>Q99750</id>
        <label>MDFI</label>
    </interactant>
    <organismsDiffer>false</organismsDiffer>
    <experiments>3</experiments>
</comment>
<comment type="interaction">
    <interactant intactId="EBI-744352">
        <id>O14764</id>
    </interactant>
    <interactant intactId="EBI-945833">
        <id>Q7Z3S9</id>
        <label>NOTCH2NLA</label>
    </interactant>
    <organismsDiffer>false</organismsDiffer>
    <experiments>3</experiments>
</comment>
<comment type="interaction">
    <interactant intactId="EBI-744352">
        <id>O14764</id>
    </interactant>
    <interactant intactId="EBI-741480">
        <id>Q9UMX0</id>
        <label>UBQLN1</label>
    </interactant>
    <organismsDiffer>false</organismsDiffer>
    <experiments>4</experiments>
</comment>
<comment type="interaction">
    <interactant intactId="EBI-744352">
        <id>O14764</id>
    </interactant>
    <interactant intactId="EBI-10173939">
        <id>Q9UMX0-2</id>
        <label>UBQLN1</label>
    </interactant>
    <organismsDiffer>false</organismsDiffer>
    <experiments>3</experiments>
</comment>
<comment type="subcellular location">
    <subcellularLocation>
        <location evidence="1">Cell membrane</location>
        <topology evidence="6">Multi-pass membrane protein</topology>
    </subcellularLocation>
</comment>
<comment type="domain">
    <text evidence="6">GABAARs subunits share a common topological structure: a peptide sequence made up of a long extracellular N-terminal, four transmembrane domains, intracellular or cytoplasmic domain located between the third and the fourth transmembrane domains.</text>
</comment>
<comment type="disease" evidence="3">
    <disease id="DI-00508">
        <name>Generalized epilepsy with febrile seizures plus 5</name>
        <acronym>GEFSP5</acronym>
        <description>A rare autosomal dominant, familial condition with incomplete penetrance and large intrafamilial variability. Patients display febrile seizures persisting sometimes beyond the age of 6 years and/or a variety of afebrile seizure types. This disease combines febrile seizures, generalized seizures often precipitated by fever at age 6 years or more, and partial seizures, with a variable degree of severity.</description>
        <dbReference type="MIM" id="613060"/>
    </disease>
    <text>Disease susceptibility is associated with variants affecting the gene represented in this entry.</text>
</comment>
<comment type="disease" evidence="3">
    <disease id="DI-02485">
        <name>Epilepsy, idiopathic generalized 10</name>
        <acronym>EIG10</acronym>
        <description>A disorder characterized by recurring generalized seizures in the absence of detectable brain lesions and/or metabolic abnormalities. Generalized seizures arise diffusely and simultaneously from both hemispheres of the brain.</description>
        <dbReference type="MIM" id="613060"/>
    </disease>
    <text>Disease susceptibility is associated with variants affecting the gene represented in this entry.</text>
</comment>
<comment type="similarity">
    <text evidence="9">Belongs to the ligand-gated ion channel (TC 1.A.9) family. Gamma-aminobutyric acid receptor (TC 1.A.9.5) subfamily. GABRD sub-subfamily.</text>
</comment>
<name>GBRD_HUMAN</name>
<protein>
    <recommendedName>
        <fullName evidence="8">Gamma-aminobutyric acid receptor subunit delta</fullName>
    </recommendedName>
    <alternativeName>
        <fullName>GABA(A) receptor subunit delta</fullName>
        <shortName evidence="8">GABAAR subunit delta</shortName>
    </alternativeName>
</protein>
<accession>O14764</accession>
<accession>Q8N4N9</accession>
<evidence type="ECO:0000250" key="1">
    <source>
        <dbReference type="UniProtKB" id="P18506"/>
    </source>
</evidence>
<evidence type="ECO:0000255" key="2"/>
<evidence type="ECO:0000269" key="3">
    <source>
    </source>
</evidence>
<evidence type="ECO:0000269" key="4">
    <source>
    </source>
</evidence>
<evidence type="ECO:0000269" key="5">
    <source>
    </source>
</evidence>
<evidence type="ECO:0000269" key="6">
    <source>
    </source>
</evidence>
<evidence type="ECO:0000269" key="7">
    <source ref="1"/>
</evidence>
<evidence type="ECO:0000303" key="8">
    <source>
    </source>
</evidence>
<evidence type="ECO:0000305" key="9"/>
<evidence type="ECO:0000312" key="10">
    <source>
        <dbReference type="HGNC" id="HGNC:4084"/>
    </source>
</evidence>
<evidence type="ECO:0007744" key="11">
    <source>
        <dbReference type="PDB" id="7QN5"/>
    </source>
</evidence>
<evidence type="ECO:0007744" key="12">
    <source>
        <dbReference type="PDB" id="7QN6"/>
    </source>
</evidence>
<evidence type="ECO:0007744" key="13">
    <source>
        <dbReference type="PDB" id="7QN7"/>
    </source>
</evidence>
<evidence type="ECO:0007744" key="14">
    <source>
        <dbReference type="PDB" id="7QN8"/>
    </source>
</evidence>
<evidence type="ECO:0007744" key="15">
    <source>
        <dbReference type="PDB" id="7QN9"/>
    </source>
</evidence>
<evidence type="ECO:0007744" key="16">
    <source>
        <dbReference type="PDB" id="7QNC"/>
    </source>
</evidence>
<evidence type="ECO:0007744" key="17">
    <source>
        <dbReference type="PDB" id="7QND"/>
    </source>
</evidence>
<evidence type="ECO:0007829" key="18">
    <source>
        <dbReference type="PDB" id="7QN5"/>
    </source>
</evidence>